<dbReference type="EC" id="3.1.1.4" evidence="3 5 6"/>
<dbReference type="SMR" id="C0HKB9"/>
<dbReference type="GO" id="GO:0005576">
    <property type="term" value="C:extracellular region"/>
    <property type="evidence" value="ECO:0007669"/>
    <property type="project" value="UniProtKB-SubCell"/>
</dbReference>
<dbReference type="GO" id="GO:0005509">
    <property type="term" value="F:calcium ion binding"/>
    <property type="evidence" value="ECO:0007669"/>
    <property type="project" value="InterPro"/>
</dbReference>
<dbReference type="GO" id="GO:0047498">
    <property type="term" value="F:calcium-dependent phospholipase A2 activity"/>
    <property type="evidence" value="ECO:0007669"/>
    <property type="project" value="TreeGrafter"/>
</dbReference>
<dbReference type="GO" id="GO:0005543">
    <property type="term" value="F:phospholipid binding"/>
    <property type="evidence" value="ECO:0007669"/>
    <property type="project" value="TreeGrafter"/>
</dbReference>
<dbReference type="GO" id="GO:0005102">
    <property type="term" value="F:signaling receptor binding"/>
    <property type="evidence" value="ECO:0007669"/>
    <property type="project" value="TreeGrafter"/>
</dbReference>
<dbReference type="GO" id="GO:0050482">
    <property type="term" value="P:arachidonate secretion"/>
    <property type="evidence" value="ECO:0007669"/>
    <property type="project" value="InterPro"/>
</dbReference>
<dbReference type="GO" id="GO:0006633">
    <property type="term" value="P:fatty acid biosynthetic process"/>
    <property type="evidence" value="ECO:0007669"/>
    <property type="project" value="TreeGrafter"/>
</dbReference>
<dbReference type="GO" id="GO:0016042">
    <property type="term" value="P:lipid catabolic process"/>
    <property type="evidence" value="ECO:0007669"/>
    <property type="project" value="UniProtKB-KW"/>
</dbReference>
<dbReference type="GO" id="GO:0006644">
    <property type="term" value="P:phospholipid metabolic process"/>
    <property type="evidence" value="ECO:0007669"/>
    <property type="project" value="InterPro"/>
</dbReference>
<dbReference type="GO" id="GO:0048146">
    <property type="term" value="P:positive regulation of fibroblast proliferation"/>
    <property type="evidence" value="ECO:0007669"/>
    <property type="project" value="TreeGrafter"/>
</dbReference>
<dbReference type="CDD" id="cd00125">
    <property type="entry name" value="PLA2c"/>
    <property type="match status" value="1"/>
</dbReference>
<dbReference type="FunFam" id="1.20.90.10:FF:000007">
    <property type="entry name" value="Acidic phospholipase A2"/>
    <property type="match status" value="1"/>
</dbReference>
<dbReference type="Gene3D" id="1.20.90.10">
    <property type="entry name" value="Phospholipase A2 domain"/>
    <property type="match status" value="1"/>
</dbReference>
<dbReference type="InterPro" id="IPR001211">
    <property type="entry name" value="PLipase_A2"/>
</dbReference>
<dbReference type="InterPro" id="IPR033112">
    <property type="entry name" value="PLipase_A2_Asp_AS"/>
</dbReference>
<dbReference type="InterPro" id="IPR016090">
    <property type="entry name" value="PLipase_A2_dom"/>
</dbReference>
<dbReference type="InterPro" id="IPR036444">
    <property type="entry name" value="PLipase_A2_dom_sf"/>
</dbReference>
<dbReference type="InterPro" id="IPR033113">
    <property type="entry name" value="PLipase_A2_His_AS"/>
</dbReference>
<dbReference type="PANTHER" id="PTHR11716:SF94">
    <property type="entry name" value="PHOSPHOLIPASE A2"/>
    <property type="match status" value="1"/>
</dbReference>
<dbReference type="PANTHER" id="PTHR11716">
    <property type="entry name" value="PHOSPHOLIPASE A2 FAMILY MEMBER"/>
    <property type="match status" value="1"/>
</dbReference>
<dbReference type="Pfam" id="PF00068">
    <property type="entry name" value="Phospholip_A2_1"/>
    <property type="match status" value="1"/>
</dbReference>
<dbReference type="PRINTS" id="PR00389">
    <property type="entry name" value="PHPHLIPASEA2"/>
</dbReference>
<dbReference type="SMART" id="SM00085">
    <property type="entry name" value="PA2c"/>
    <property type="match status" value="1"/>
</dbReference>
<dbReference type="SUPFAM" id="SSF48619">
    <property type="entry name" value="Phospholipase A2, PLA2"/>
    <property type="match status" value="1"/>
</dbReference>
<dbReference type="PROSITE" id="PS00119">
    <property type="entry name" value="PA2_ASP"/>
    <property type="match status" value="1"/>
</dbReference>
<dbReference type="PROSITE" id="PS00118">
    <property type="entry name" value="PA2_HIS"/>
    <property type="match status" value="1"/>
</dbReference>
<evidence type="ECO:0000250" key="1">
    <source>
        <dbReference type="UniProtKB" id="P15445"/>
    </source>
</evidence>
<evidence type="ECO:0000255" key="2">
    <source>
        <dbReference type="PROSITE-ProRule" id="PRU00498"/>
    </source>
</evidence>
<evidence type="ECO:0000255" key="3">
    <source>
        <dbReference type="PROSITE-ProRule" id="PRU10035"/>
    </source>
</evidence>
<evidence type="ECO:0000255" key="4">
    <source>
        <dbReference type="PROSITE-ProRule" id="PRU10036"/>
    </source>
</evidence>
<evidence type="ECO:0000269" key="5">
    <source>
    </source>
</evidence>
<evidence type="ECO:0000269" key="6">
    <source>
    </source>
</evidence>
<evidence type="ECO:0000303" key="7">
    <source>
    </source>
</evidence>
<evidence type="ECO:0000303" key="8">
    <source>
    </source>
</evidence>
<evidence type="ECO:0000305" key="9"/>
<evidence type="ECO:0000305" key="10">
    <source>
    </source>
</evidence>
<keyword id="KW-0106">Calcium</keyword>
<keyword id="KW-0903">Direct protein sequencing</keyword>
<keyword id="KW-1015">Disulfide bond</keyword>
<keyword id="KW-0325">Glycoprotein</keyword>
<keyword id="KW-0378">Hydrolase</keyword>
<keyword id="KW-0442">Lipid degradation</keyword>
<keyword id="KW-0443">Lipid metabolism</keyword>
<keyword id="KW-0479">Metal-binding</keyword>
<keyword id="KW-0964">Secreted</keyword>
<organism evidence="8">
    <name type="scientific">Micrurus mipartitus</name>
    <name type="common">Red-tailed coral snake</name>
    <dbReference type="NCBI Taxonomy" id="430902"/>
    <lineage>
        <taxon>Eukaryota</taxon>
        <taxon>Metazoa</taxon>
        <taxon>Chordata</taxon>
        <taxon>Craniata</taxon>
        <taxon>Vertebrata</taxon>
        <taxon>Euteleostomi</taxon>
        <taxon>Lepidosauria</taxon>
        <taxon>Squamata</taxon>
        <taxon>Bifurcata</taxon>
        <taxon>Unidentata</taxon>
        <taxon>Episquamata</taxon>
        <taxon>Toxicofera</taxon>
        <taxon>Serpentes</taxon>
        <taxon>Colubroidea</taxon>
        <taxon>Elapidae</taxon>
        <taxon>Elapinae</taxon>
        <taxon>Micrurus</taxon>
    </lineage>
</organism>
<protein>
    <recommendedName>
        <fullName evidence="8">Basic phospholipase A2</fullName>
        <shortName evidence="7">Mm-20</shortName>
        <shortName evidence="8">MmipPLA2</shortName>
        <shortName evidence="1">svPLA2</shortName>
        <ecNumber evidence="3 5 6">3.1.1.4</ecNumber>
    </recommendedName>
    <alternativeName>
        <fullName evidence="1">Phosphatidylcholine 2-acylhydrolase</fullName>
    </alternativeName>
</protein>
<sequence>NLIHFSSMIKCTIPGSKPVPDYSDYGCYCGKGGSGTPVDALDRCCQVHDKCYGDAESIYGCTPFLTYYSYECSERQDLCRGNGTKCKAFVCNCDRLAALCFAKAPYNKKNYNINLNRCK</sequence>
<feature type="chain" id="PRO_0000441097" description="Basic phospholipase A2" evidence="6">
    <location>
        <begin position="1"/>
        <end position="119"/>
    </location>
</feature>
<feature type="active site" evidence="3">
    <location>
        <position position="48"/>
    </location>
</feature>
<feature type="active site" evidence="4">
    <location>
        <position position="94"/>
    </location>
</feature>
<feature type="binding site" evidence="1">
    <location>
        <position position="28"/>
    </location>
    <ligand>
        <name>Ca(2+)</name>
        <dbReference type="ChEBI" id="CHEBI:29108"/>
    </ligand>
</feature>
<feature type="binding site" evidence="1">
    <location>
        <position position="30"/>
    </location>
    <ligand>
        <name>Ca(2+)</name>
        <dbReference type="ChEBI" id="CHEBI:29108"/>
    </ligand>
</feature>
<feature type="binding site" evidence="1">
    <location>
        <position position="32"/>
    </location>
    <ligand>
        <name>Ca(2+)</name>
        <dbReference type="ChEBI" id="CHEBI:29108"/>
    </ligand>
</feature>
<feature type="binding site" evidence="1">
    <location>
        <position position="49"/>
    </location>
    <ligand>
        <name>Ca(2+)</name>
        <dbReference type="ChEBI" id="CHEBI:29108"/>
    </ligand>
</feature>
<feature type="glycosylation site" description="N-linked (GlcNAc...) asparagine" evidence="2">
    <location>
        <position position="82"/>
    </location>
</feature>
<feature type="disulfide bond" evidence="1">
    <location>
        <begin position="11"/>
        <end position="72"/>
    </location>
</feature>
<feature type="disulfide bond" evidence="1">
    <location>
        <begin position="27"/>
        <end position="118"/>
    </location>
</feature>
<feature type="disulfide bond" evidence="1">
    <location>
        <begin position="29"/>
        <end position="45"/>
    </location>
</feature>
<feature type="disulfide bond" evidence="1">
    <location>
        <begin position="44"/>
        <end position="100"/>
    </location>
</feature>
<feature type="disulfide bond" evidence="1">
    <location>
        <begin position="51"/>
        <end position="93"/>
    </location>
</feature>
<feature type="disulfide bond" evidence="1">
    <location>
        <begin position="61"/>
        <end position="86"/>
    </location>
</feature>
<feature type="disulfide bond" evidence="1">
    <location>
        <begin position="79"/>
        <end position="91"/>
    </location>
</feature>
<comment type="function">
    <text evidence="5 6">Snake venom phospholipase A2 (PLA2) that shows weak myotoxicity and induces edema in mice (PubMed:28315380). Shows no cytotoxicity in vitro (PubMed:28315380). Has an anticoagulant effect in vitro (PubMed:21963438, PubMed:28315380). PLA2 catalyzes the calcium-dependent hydrolysis of the 2-acyl groups in 3-sn-phosphoglycerides (PubMed:21963438, PubMed:28315380).</text>
</comment>
<comment type="catalytic activity">
    <reaction evidence="3 5 6">
        <text>a 1,2-diacyl-sn-glycero-3-phosphocholine + H2O = a 1-acyl-sn-glycero-3-phosphocholine + a fatty acid + H(+)</text>
        <dbReference type="Rhea" id="RHEA:15801"/>
        <dbReference type="ChEBI" id="CHEBI:15377"/>
        <dbReference type="ChEBI" id="CHEBI:15378"/>
        <dbReference type="ChEBI" id="CHEBI:28868"/>
        <dbReference type="ChEBI" id="CHEBI:57643"/>
        <dbReference type="ChEBI" id="CHEBI:58168"/>
        <dbReference type="EC" id="3.1.1.4"/>
    </reaction>
</comment>
<comment type="cofactor">
    <cofactor evidence="1">
        <name>Ca(2+)</name>
        <dbReference type="ChEBI" id="CHEBI:29108"/>
    </cofactor>
    <text evidence="1">Binds 1 Ca(2+) ion per subunit.</text>
</comment>
<comment type="subcellular location">
    <subcellularLocation>
        <location evidence="5 6">Secreted</location>
    </subcellularLocation>
</comment>
<comment type="tissue specificity">
    <text evidence="10">Expressed by the venom gland.</text>
</comment>
<comment type="mass spectrometry"/>
<comment type="mass spectrometry"/>
<comment type="toxic dose">
    <text evidence="5">LD(50) is 0.1 ug/g when injected intraperitoneally in mice.</text>
</comment>
<comment type="similarity">
    <text evidence="9">Belongs to the phospholipase A2 family. Group I subfamily. D49 sub-subfamily.</text>
</comment>
<name>PA2B1_MICMP</name>
<accession>C0HKB9</accession>
<proteinExistence type="evidence at protein level"/>
<reference evidence="9" key="1">
    <citation type="journal article" date="2017" name="Biochimie">
        <title>Primary structures and partial toxicological characterization of two phospholipases A2 from Micrurus mipartitus and Micrurus dumerilii coral snake venoms.</title>
        <authorList>
            <person name="Rey-Suarez P."/>
            <person name="Nunez V."/>
            <person name="Saldarriaga-Cordoba M."/>
            <person name="Lomonte B."/>
        </authorList>
    </citation>
    <scope>PROTEIN SEQUENCE</scope>
    <scope>FUNCTION</scope>
    <scope>CATALYTIC ACTIVITY</scope>
    <scope>SUBCELLULAR LOCATION</scope>
    <scope>MASS SPECTROMETRY</scope>
    <scope>IDENTIFICATION BY MASS SPECTROMETRY</scope>
    <source>
        <tissue evidence="8">Venom</tissue>
    </source>
</reference>
<reference evidence="9" key="2">
    <citation type="journal article" date="2011" name="J. Proteomics">
        <title>Proteomic and biological characterization of the venom of the redtail coral snake, Micrurus mipartitus (Elapidae), from Colombia and Costa Rica.</title>
        <authorList>
            <person name="Rey-Suarez P."/>
            <person name="Nunez V."/>
            <person name="Gutierrez J.M."/>
            <person name="Lomonte B."/>
        </authorList>
    </citation>
    <scope>PROTEIN SEQUENCE OF 90-112</scope>
    <scope>FUNCTION</scope>
    <scope>CATALYTIC ACTIVITY</scope>
    <scope>TOXIC DOSE</scope>
    <scope>SUBCELLULAR LOCATION</scope>
    <scope>MASS SPECTROMETRY</scope>
    <scope>IDENTIFICATION BY MASS SPECTROMETRY</scope>
    <source>
        <tissue evidence="7">Venom</tissue>
    </source>
</reference>